<comment type="similarity">
    <text evidence="2">Belongs to the WD repeat WDR55 family.</text>
</comment>
<keyword id="KW-1185">Reference proteome</keyword>
<keyword id="KW-0677">Repeat</keyword>
<keyword id="KW-0853">WD repeat</keyword>
<reference key="1">
    <citation type="journal article" date="2007" name="Nature">
        <title>Evolution of genes and genomes on the Drosophila phylogeny.</title>
        <authorList>
            <consortium name="Drosophila 12 genomes consortium"/>
        </authorList>
    </citation>
    <scope>NUCLEOTIDE SEQUENCE [LARGE SCALE GENOMIC DNA]</scope>
    <source>
        <strain>Tucson 14024-0371.13</strain>
    </source>
</reference>
<proteinExistence type="inferred from homology"/>
<dbReference type="EMBL" id="CH902617">
    <property type="protein sequence ID" value="EDV43251.1"/>
    <property type="molecule type" value="Genomic_DNA"/>
</dbReference>
<dbReference type="SMR" id="B3M1G0"/>
<dbReference type="FunCoup" id="B3M1G0">
    <property type="interactions" value="743"/>
</dbReference>
<dbReference type="STRING" id="7217.B3M1G0"/>
<dbReference type="EnsemblMetazoa" id="FBtr0123099">
    <property type="protein sequence ID" value="FBpp0121591"/>
    <property type="gene ID" value="FBgn0095417"/>
</dbReference>
<dbReference type="EnsemblMetazoa" id="XM_001954654.4">
    <property type="protein sequence ID" value="XP_001954690.1"/>
    <property type="gene ID" value="LOC6501174"/>
</dbReference>
<dbReference type="GeneID" id="6501174"/>
<dbReference type="KEGG" id="dan:6501174"/>
<dbReference type="eggNOG" id="KOG2444">
    <property type="taxonomic scope" value="Eukaryota"/>
</dbReference>
<dbReference type="HOGENOM" id="CLU_035848_1_0_1"/>
<dbReference type="InParanoid" id="B3M1G0"/>
<dbReference type="OMA" id="GIIKHWD"/>
<dbReference type="OrthoDB" id="2288928at2759"/>
<dbReference type="PhylomeDB" id="B3M1G0"/>
<dbReference type="Proteomes" id="UP000007801">
    <property type="component" value="Unassembled WGS sequence"/>
</dbReference>
<dbReference type="GO" id="GO:0050829">
    <property type="term" value="P:defense response to Gram-negative bacterium"/>
    <property type="evidence" value="ECO:0007669"/>
    <property type="project" value="EnsemblMetazoa"/>
</dbReference>
<dbReference type="Gene3D" id="2.130.10.10">
    <property type="entry name" value="YVTN repeat-like/Quinoprotein amine dehydrogenase"/>
    <property type="match status" value="2"/>
</dbReference>
<dbReference type="InterPro" id="IPR015943">
    <property type="entry name" value="WD40/YVTN_repeat-like_dom_sf"/>
</dbReference>
<dbReference type="InterPro" id="IPR019775">
    <property type="entry name" value="WD40_repeat_CS"/>
</dbReference>
<dbReference type="InterPro" id="IPR036322">
    <property type="entry name" value="WD40_repeat_dom_sf"/>
</dbReference>
<dbReference type="InterPro" id="IPR001680">
    <property type="entry name" value="WD40_rpt"/>
</dbReference>
<dbReference type="InterPro" id="IPR050505">
    <property type="entry name" value="WDR55_POC1"/>
</dbReference>
<dbReference type="PANTHER" id="PTHR44019">
    <property type="entry name" value="WD REPEAT-CONTAINING PROTEIN 55"/>
    <property type="match status" value="1"/>
</dbReference>
<dbReference type="PANTHER" id="PTHR44019:SF20">
    <property type="entry name" value="WD REPEAT-CONTAINING PROTEIN 55"/>
    <property type="match status" value="1"/>
</dbReference>
<dbReference type="Pfam" id="PF24796">
    <property type="entry name" value="WDR55"/>
    <property type="match status" value="1"/>
</dbReference>
<dbReference type="SMART" id="SM00320">
    <property type="entry name" value="WD40"/>
    <property type="match status" value="5"/>
</dbReference>
<dbReference type="SUPFAM" id="SSF50978">
    <property type="entry name" value="WD40 repeat-like"/>
    <property type="match status" value="1"/>
</dbReference>
<dbReference type="PROSITE" id="PS00678">
    <property type="entry name" value="WD_REPEATS_1"/>
    <property type="match status" value="1"/>
</dbReference>
<dbReference type="PROSITE" id="PS50082">
    <property type="entry name" value="WD_REPEATS_2"/>
    <property type="match status" value="2"/>
</dbReference>
<dbReference type="PROSITE" id="PS50294">
    <property type="entry name" value="WD_REPEATS_REGION"/>
    <property type="match status" value="1"/>
</dbReference>
<protein>
    <recommendedName>
        <fullName>WD repeat-containing protein 55 homolog</fullName>
    </recommendedName>
</protein>
<name>WDR55_DROAN</name>
<evidence type="ECO:0000256" key="1">
    <source>
        <dbReference type="SAM" id="MobiDB-lite"/>
    </source>
</evidence>
<evidence type="ECO:0000305" key="2"/>
<gene>
    <name type="ORF">GF18399</name>
</gene>
<sequence length="481" mass="53978">MHTHNHFKTPSDAEEVDDLDDEMVMGVIAEIEQEVLFESDSDDDGFGAEQLGAPPPDDDNDQISSSDDSFDPNAEDSDSDDSMQHEEQAQATSAKRRKDDDGPSGSNRDVETNFDLDLEDETDETVRAIIAAIKKPRSAPPEIKLEDFVTDISFHPERNIIALATIIGDVHLYEYANEGNKLIRTIEVHSKACRDVEFTEDGRNLLTCSKDKCVMVTDMETEKLKKLYETAHDDAINTLHVLNENLFATGDDAGTVKLWDLRTKQHVFELKQIDDQVTQLLSNEQNTLLLATSADGYLTTFNIPGRKLYVQSEPYEEELNCMGIYRGDSKLVVGTSKGKLYSYNWGSFGYHCDMYPGIKSPISLMIPITDRIACVAGEDGNIRACHITPYRNLGVVGQHNMPIEALDVNSTGELLASSSHNNDVRFWNVKYFEDFGDIKYNEKHNAYKEQRHNLPSSKCTNTGDFFADLAKQEDDEDDDAT</sequence>
<organism>
    <name type="scientific">Drosophila ananassae</name>
    <name type="common">Fruit fly</name>
    <dbReference type="NCBI Taxonomy" id="7217"/>
    <lineage>
        <taxon>Eukaryota</taxon>
        <taxon>Metazoa</taxon>
        <taxon>Ecdysozoa</taxon>
        <taxon>Arthropoda</taxon>
        <taxon>Hexapoda</taxon>
        <taxon>Insecta</taxon>
        <taxon>Pterygota</taxon>
        <taxon>Neoptera</taxon>
        <taxon>Endopterygota</taxon>
        <taxon>Diptera</taxon>
        <taxon>Brachycera</taxon>
        <taxon>Muscomorpha</taxon>
        <taxon>Ephydroidea</taxon>
        <taxon>Drosophilidae</taxon>
        <taxon>Drosophila</taxon>
        <taxon>Sophophora</taxon>
    </lineage>
</organism>
<accession>B3M1G0</accession>
<feature type="chain" id="PRO_0000373958" description="WD repeat-containing protein 55 homolog">
    <location>
        <begin position="1"/>
        <end position="481"/>
    </location>
</feature>
<feature type="repeat" description="WD 1">
    <location>
        <begin position="144"/>
        <end position="183"/>
    </location>
</feature>
<feature type="repeat" description="WD 2">
    <location>
        <begin position="188"/>
        <end position="227"/>
    </location>
</feature>
<feature type="repeat" description="WD 3">
    <location>
        <begin position="231"/>
        <end position="269"/>
    </location>
</feature>
<feature type="repeat" description="WD 4">
    <location>
        <begin position="272"/>
        <end position="311"/>
    </location>
</feature>
<feature type="repeat" description="WD 5">
    <location>
        <begin position="314"/>
        <end position="353"/>
    </location>
</feature>
<feature type="repeat" description="WD 6">
    <location>
        <begin position="398"/>
        <end position="437"/>
    </location>
</feature>
<feature type="region of interest" description="Disordered" evidence="1">
    <location>
        <begin position="1"/>
        <end position="116"/>
    </location>
</feature>
<feature type="compositionally biased region" description="Acidic residues" evidence="1">
    <location>
        <begin position="12"/>
        <end position="23"/>
    </location>
</feature>
<feature type="compositionally biased region" description="Acidic residues" evidence="1">
    <location>
        <begin position="31"/>
        <end position="46"/>
    </location>
</feature>
<feature type="compositionally biased region" description="Acidic residues" evidence="1">
    <location>
        <begin position="68"/>
        <end position="81"/>
    </location>
</feature>